<evidence type="ECO:0000255" key="1"/>
<evidence type="ECO:0000305" key="2"/>
<reference key="1">
    <citation type="journal article" date="2003" name="Proc. Natl. Acad. Sci. U.S.A.">
        <title>Complete genome sequence of the Q-fever pathogen, Coxiella burnetii.</title>
        <authorList>
            <person name="Seshadri R."/>
            <person name="Paulsen I.T."/>
            <person name="Eisen J.A."/>
            <person name="Read T.D."/>
            <person name="Nelson K.E."/>
            <person name="Nelson W.C."/>
            <person name="Ward N.L."/>
            <person name="Tettelin H."/>
            <person name="Davidsen T.M."/>
            <person name="Beanan M.J."/>
            <person name="DeBoy R.T."/>
            <person name="Daugherty S.C."/>
            <person name="Brinkac L.M."/>
            <person name="Madupu R."/>
            <person name="Dodson R.J."/>
            <person name="Khouri H.M."/>
            <person name="Lee K.H."/>
            <person name="Carty H.A."/>
            <person name="Scanlan D."/>
            <person name="Heinzen R.A."/>
            <person name="Thompson H.A."/>
            <person name="Samuel J.E."/>
            <person name="Fraser C.M."/>
            <person name="Heidelberg J.F."/>
        </authorList>
    </citation>
    <scope>NUCLEOTIDE SEQUENCE [LARGE SCALE GENOMIC DNA]</scope>
    <source>
        <strain>RSA 493 / Nine Mile phase I</strain>
    </source>
</reference>
<name>Y1413_COXBU</name>
<organism>
    <name type="scientific">Coxiella burnetii (strain RSA 493 / Nine Mile phase I)</name>
    <dbReference type="NCBI Taxonomy" id="227377"/>
    <lineage>
        <taxon>Bacteria</taxon>
        <taxon>Pseudomonadati</taxon>
        <taxon>Pseudomonadota</taxon>
        <taxon>Gammaproteobacteria</taxon>
        <taxon>Legionellales</taxon>
        <taxon>Coxiellaceae</taxon>
        <taxon>Coxiella</taxon>
    </lineage>
</organism>
<comment type="subcellular location">
    <subcellularLocation>
        <location evidence="2">Cell membrane</location>
        <topology evidence="2">Multi-pass membrane protein</topology>
    </subcellularLocation>
</comment>
<sequence>MNIKRRLKYLTSCLLVSAFFWINSSAWAGGPEIPPSAPWVIYLGGFGGIYVANFEYQGTYLGGSFTVPIGSNVHQNGYTAGGHIGLRYYFSNPWFLGLEFAAMGNSENATTAESVLAPSPDDLIFNLVNQFRIKSNLDLTAQLGVNITPQTRVYIKGGASYARIRHILTVFNPATLTPTISLQRTTHKNRWGFLVGFGLGYDFCPWFGIFTEYNYYDYGRVGLDSLSNIRPNNGADTYHQNVRVHAYSVLLGVNLNFSV</sequence>
<proteinExistence type="inferred from homology"/>
<dbReference type="EMBL" id="AE016828">
    <property type="protein sequence ID" value="AAO90911.1"/>
    <property type="molecule type" value="Genomic_DNA"/>
</dbReference>
<dbReference type="RefSeq" id="NP_820397.1">
    <property type="nucleotide sequence ID" value="NC_002971.4"/>
</dbReference>
<dbReference type="RefSeq" id="WP_010958211.1">
    <property type="nucleotide sequence ID" value="NC_002971.4"/>
</dbReference>
<dbReference type="SMR" id="Q83BT9"/>
<dbReference type="STRING" id="227377.CBU_1413"/>
<dbReference type="EnsemblBacteria" id="AAO90911">
    <property type="protein sequence ID" value="AAO90911"/>
    <property type="gene ID" value="CBU_1413"/>
</dbReference>
<dbReference type="GeneID" id="1209319"/>
<dbReference type="KEGG" id="cbu:CBU_1413"/>
<dbReference type="PATRIC" id="fig|227377.7.peg.1413"/>
<dbReference type="eggNOG" id="COG3637">
    <property type="taxonomic scope" value="Bacteria"/>
</dbReference>
<dbReference type="HOGENOM" id="CLU_1018273_0_0_6"/>
<dbReference type="Proteomes" id="UP000002671">
    <property type="component" value="Chromosome"/>
</dbReference>
<dbReference type="GO" id="GO:0005886">
    <property type="term" value="C:plasma membrane"/>
    <property type="evidence" value="ECO:0007669"/>
    <property type="project" value="UniProtKB-SubCell"/>
</dbReference>
<dbReference type="Gene3D" id="2.40.160.20">
    <property type="match status" value="1"/>
</dbReference>
<dbReference type="InterPro" id="IPR051692">
    <property type="entry name" value="OMP-like"/>
</dbReference>
<dbReference type="InterPro" id="IPR011250">
    <property type="entry name" value="OMP/PagP_b-brl"/>
</dbReference>
<dbReference type="InterPro" id="IPR027385">
    <property type="entry name" value="OMP_b-brl"/>
</dbReference>
<dbReference type="PANTHER" id="PTHR34001">
    <property type="entry name" value="BLL7405 PROTEIN"/>
    <property type="match status" value="1"/>
</dbReference>
<dbReference type="PANTHER" id="PTHR34001:SF3">
    <property type="entry name" value="BLL7405 PROTEIN"/>
    <property type="match status" value="1"/>
</dbReference>
<dbReference type="Pfam" id="PF13505">
    <property type="entry name" value="OMP_b-brl"/>
    <property type="match status" value="1"/>
</dbReference>
<dbReference type="SUPFAM" id="SSF56925">
    <property type="entry name" value="OMPA-like"/>
    <property type="match status" value="1"/>
</dbReference>
<gene>
    <name type="ordered locus">CBU_1413</name>
</gene>
<accession>Q83BT9</accession>
<feature type="signal peptide" evidence="1">
    <location>
        <begin position="1"/>
        <end position="28"/>
    </location>
</feature>
<feature type="chain" id="PRO_0000282833" description="Uncharacterized protein CBU_1413">
    <location>
        <begin position="29"/>
        <end position="259"/>
    </location>
</feature>
<feature type="transmembrane region" description="Helical" evidence="1">
    <location>
        <begin position="32"/>
        <end position="52"/>
    </location>
</feature>
<feature type="transmembrane region" description="Helical" evidence="1">
    <location>
        <begin position="191"/>
        <end position="211"/>
    </location>
</feature>
<keyword id="KW-1003">Cell membrane</keyword>
<keyword id="KW-0472">Membrane</keyword>
<keyword id="KW-1185">Reference proteome</keyword>
<keyword id="KW-0732">Signal</keyword>
<keyword id="KW-0812">Transmembrane</keyword>
<keyword id="KW-1133">Transmembrane helix</keyword>
<protein>
    <recommendedName>
        <fullName>Uncharacterized protein CBU_1413</fullName>
    </recommendedName>
</protein>